<name>MSI1H_RAT</name>
<protein>
    <recommendedName>
        <fullName>RNA-binding protein Musashi homolog 1</fullName>
        <shortName>Musashi-1</shortName>
    </recommendedName>
</protein>
<evidence type="ECO:0000250" key="1"/>
<evidence type="ECO:0000250" key="2">
    <source>
        <dbReference type="UniProtKB" id="O43347"/>
    </source>
</evidence>
<evidence type="ECO:0000255" key="3">
    <source>
        <dbReference type="PROSITE-ProRule" id="PRU00176"/>
    </source>
</evidence>
<evidence type="ECO:0000269" key="4">
    <source>
    </source>
</evidence>
<evidence type="ECO:0000269" key="5">
    <source>
    </source>
</evidence>
<evidence type="ECO:0000305" key="6"/>
<organism>
    <name type="scientific">Rattus norvegicus</name>
    <name type="common">Rat</name>
    <dbReference type="NCBI Taxonomy" id="10116"/>
    <lineage>
        <taxon>Eukaryota</taxon>
        <taxon>Metazoa</taxon>
        <taxon>Chordata</taxon>
        <taxon>Craniata</taxon>
        <taxon>Vertebrata</taxon>
        <taxon>Euteleostomi</taxon>
        <taxon>Mammalia</taxon>
        <taxon>Eutheria</taxon>
        <taxon>Euarchontoglires</taxon>
        <taxon>Glires</taxon>
        <taxon>Rodentia</taxon>
        <taxon>Myomorpha</taxon>
        <taxon>Muroidea</taxon>
        <taxon>Muridae</taxon>
        <taxon>Murinae</taxon>
        <taxon>Rattus</taxon>
    </lineage>
</organism>
<feature type="chain" id="PRO_0000081651" description="RNA-binding protein Musashi homolog 1">
    <location>
        <begin position="1"/>
        <end position="362"/>
    </location>
</feature>
<feature type="domain" description="RRM 1" evidence="3">
    <location>
        <begin position="20"/>
        <end position="110"/>
    </location>
</feature>
<feature type="domain" description="RRM 2" evidence="3">
    <location>
        <begin position="109"/>
        <end position="186"/>
    </location>
</feature>
<feature type="modified residue" description="N-acetylmethionine" evidence="2">
    <location>
        <position position="1"/>
    </location>
</feature>
<feature type="modified residue" description="Phosphoserine" evidence="2">
    <location>
        <position position="191"/>
    </location>
</feature>
<comment type="function">
    <text evidence="1">RNA binding protein that regulates the expression of target mRNAs at the translation level. Regulates expression of the NOTCH1 antagonist NUMB. Binds RNA containing the sequence 5'-GUUAGUUAGUUAGUU-3' and other sequences containing the pattern 5'-[GA]U(1-3)AGU-3'. May play a role in the proliferation and maintenance of stem cells in the central nervous system (By similarity).</text>
</comment>
<comment type="subcellular location">
    <subcellularLocation>
        <location evidence="4 5">Cytoplasm</location>
    </subcellularLocation>
    <subcellularLocation>
        <location evidence="4">Nucleus</location>
    </subcellularLocation>
</comment>
<comment type="tissue specificity">
    <text evidence="4 5">Expressed in stem and progenitor cells in the subventricular zone of the hippocampus (at protein level) (PubMed:16554442). Detected throughout the hippocampus (PubMed:12205668). Detected in astrocytes, ependymal cells and in the anterior subventricular zone. Detected in proliferating cells (PubMed:12205668).</text>
</comment>
<comment type="induction">
    <text evidence="4">Up-regulated in the CA1 region of the hippocampus after ischemia.</text>
</comment>
<comment type="domain">
    <text evidence="1">The first RNA recognition motif binds more strongly to RNA compared to the second one.</text>
</comment>
<comment type="similarity">
    <text evidence="6">Belongs to the Musashi family.</text>
</comment>
<keyword id="KW-0007">Acetylation</keyword>
<keyword id="KW-0963">Cytoplasm</keyword>
<keyword id="KW-0539">Nucleus</keyword>
<keyword id="KW-0597">Phosphoprotein</keyword>
<keyword id="KW-1185">Reference proteome</keyword>
<keyword id="KW-0677">Repeat</keyword>
<keyword id="KW-0694">RNA-binding</keyword>
<accession>Q8K3P4</accession>
<proteinExistence type="evidence at protein level"/>
<dbReference type="EMBL" id="AY043393">
    <property type="protein sequence ID" value="AAK94485.1"/>
    <property type="molecule type" value="mRNA"/>
</dbReference>
<dbReference type="RefSeq" id="NP_683688.1">
    <property type="nucleotide sequence ID" value="NM_148890.2"/>
</dbReference>
<dbReference type="RefSeq" id="XP_063127158.1">
    <property type="nucleotide sequence ID" value="XM_063271088.1"/>
</dbReference>
<dbReference type="SMR" id="Q8K3P4"/>
<dbReference type="FunCoup" id="Q8K3P4">
    <property type="interactions" value="889"/>
</dbReference>
<dbReference type="STRING" id="10116.ENSRNOP00000001532"/>
<dbReference type="GlyGen" id="Q8K3P4">
    <property type="glycosylation" value="1 site"/>
</dbReference>
<dbReference type="PhosphoSitePlus" id="Q8K3P4"/>
<dbReference type="jPOST" id="Q8K3P4"/>
<dbReference type="PaxDb" id="10116-ENSRNOP00000001532"/>
<dbReference type="Ensembl" id="ENSRNOT00000001532.6">
    <property type="protein sequence ID" value="ENSRNOP00000001532.6"/>
    <property type="gene ID" value="ENSRNOG00000001156.8"/>
</dbReference>
<dbReference type="GeneID" id="259272"/>
<dbReference type="KEGG" id="rno:259272"/>
<dbReference type="AGR" id="RGD:628778"/>
<dbReference type="CTD" id="4440"/>
<dbReference type="RGD" id="628778">
    <property type="gene designation" value="Msi1"/>
</dbReference>
<dbReference type="eggNOG" id="KOG4205">
    <property type="taxonomic scope" value="Eukaryota"/>
</dbReference>
<dbReference type="GeneTree" id="ENSGT00940000156515"/>
<dbReference type="InParanoid" id="Q8K3P4"/>
<dbReference type="OMA" id="GINARRE"/>
<dbReference type="OrthoDB" id="1875751at2759"/>
<dbReference type="PhylomeDB" id="Q8K3P4"/>
<dbReference type="PRO" id="PR:Q8K3P4"/>
<dbReference type="Proteomes" id="UP000002494">
    <property type="component" value="Chromosome 12"/>
</dbReference>
<dbReference type="GO" id="GO:0005737">
    <property type="term" value="C:cytoplasm"/>
    <property type="evidence" value="ECO:0000266"/>
    <property type="project" value="RGD"/>
</dbReference>
<dbReference type="GO" id="GO:0005634">
    <property type="term" value="C:nucleus"/>
    <property type="evidence" value="ECO:0000266"/>
    <property type="project" value="RGD"/>
</dbReference>
<dbReference type="GO" id="GO:0042802">
    <property type="term" value="F:identical protein binding"/>
    <property type="evidence" value="ECO:0000266"/>
    <property type="project" value="RGD"/>
</dbReference>
<dbReference type="GO" id="GO:0140693">
    <property type="term" value="F:molecular condensate scaffold activity"/>
    <property type="evidence" value="ECO:0000266"/>
    <property type="project" value="RGD"/>
</dbReference>
<dbReference type="GO" id="GO:0003729">
    <property type="term" value="F:mRNA binding"/>
    <property type="evidence" value="ECO:0000318"/>
    <property type="project" value="GO_Central"/>
</dbReference>
<dbReference type="GO" id="GO:0008266">
    <property type="term" value="F:poly(U) RNA binding"/>
    <property type="evidence" value="ECO:0000266"/>
    <property type="project" value="RGD"/>
</dbReference>
<dbReference type="GO" id="GO:0042803">
    <property type="term" value="F:protein homodimerization activity"/>
    <property type="evidence" value="ECO:0000266"/>
    <property type="project" value="RGD"/>
</dbReference>
<dbReference type="GO" id="GO:0003723">
    <property type="term" value="F:RNA binding"/>
    <property type="evidence" value="ECO:0000303"/>
    <property type="project" value="RGD"/>
</dbReference>
<dbReference type="GO" id="GO:0003727">
    <property type="term" value="F:single-stranded RNA binding"/>
    <property type="evidence" value="ECO:0000266"/>
    <property type="project" value="RGD"/>
</dbReference>
<dbReference type="GO" id="GO:0007417">
    <property type="term" value="P:central nervous system development"/>
    <property type="evidence" value="ECO:0000318"/>
    <property type="project" value="GO_Central"/>
</dbReference>
<dbReference type="GO" id="GO:0030855">
    <property type="term" value="P:epithelial cell differentiation"/>
    <property type="evidence" value="ECO:0000270"/>
    <property type="project" value="RGD"/>
</dbReference>
<dbReference type="GO" id="GO:0006417">
    <property type="term" value="P:regulation of translation"/>
    <property type="evidence" value="ECO:0000318"/>
    <property type="project" value="GO_Central"/>
</dbReference>
<dbReference type="GO" id="GO:0009725">
    <property type="term" value="P:response to hormone"/>
    <property type="evidence" value="ECO:0000315"/>
    <property type="project" value="RGD"/>
</dbReference>
<dbReference type="CDD" id="cd12576">
    <property type="entry name" value="RRM1_MSI"/>
    <property type="match status" value="1"/>
</dbReference>
<dbReference type="CDD" id="cd12323">
    <property type="entry name" value="RRM2_MSI"/>
    <property type="match status" value="1"/>
</dbReference>
<dbReference type="FunFam" id="3.30.70.330:FF:000596">
    <property type="entry name" value="RNA-binding protein Musashi homolog 1"/>
    <property type="match status" value="1"/>
</dbReference>
<dbReference type="FunFam" id="3.30.70.330:FF:000020">
    <property type="entry name" value="RNA-binding protein Musashi homolog 2 isoform X1"/>
    <property type="match status" value="1"/>
</dbReference>
<dbReference type="Gene3D" id="3.30.70.330">
    <property type="match status" value="2"/>
</dbReference>
<dbReference type="InterPro" id="IPR034126">
    <property type="entry name" value="MSI_RRM2"/>
</dbReference>
<dbReference type="InterPro" id="IPR012677">
    <property type="entry name" value="Nucleotide-bd_a/b_plait_sf"/>
</dbReference>
<dbReference type="InterPro" id="IPR035979">
    <property type="entry name" value="RBD_domain_sf"/>
</dbReference>
<dbReference type="InterPro" id="IPR000504">
    <property type="entry name" value="RRM_dom"/>
</dbReference>
<dbReference type="PANTHER" id="PTHR48032:SF3">
    <property type="entry name" value="RNA-BINDING PROTEIN MUSASHI HOMOLOG 1"/>
    <property type="match status" value="1"/>
</dbReference>
<dbReference type="PANTHER" id="PTHR48032">
    <property type="entry name" value="RNA-BINDING PROTEIN MUSASHI HOMOLOG RBP6"/>
    <property type="match status" value="1"/>
</dbReference>
<dbReference type="Pfam" id="PF00076">
    <property type="entry name" value="RRM_1"/>
    <property type="match status" value="2"/>
</dbReference>
<dbReference type="SMART" id="SM00360">
    <property type="entry name" value="RRM"/>
    <property type="match status" value="2"/>
</dbReference>
<dbReference type="SUPFAM" id="SSF54928">
    <property type="entry name" value="RNA-binding domain, RBD"/>
    <property type="match status" value="2"/>
</dbReference>
<dbReference type="PROSITE" id="PS50102">
    <property type="entry name" value="RRM"/>
    <property type="match status" value="2"/>
</dbReference>
<reference key="1">
    <citation type="submission" date="2001-07" db="EMBL/GenBank/DDBJ databases">
        <title>The expression of Musashi-1 in rat small intestine.</title>
        <authorList>
            <person name="Kayahara T."/>
            <person name="Sawada M."/>
            <person name="Takaishi S."/>
            <person name="Okano H."/>
            <person name="Chiba T."/>
        </authorList>
    </citation>
    <scope>NUCLEOTIDE SEQUENCE [MRNA]</scope>
    <source>
        <strain>Wistar</strain>
    </source>
</reference>
<reference key="2">
    <citation type="journal article" date="2002" name="J. Neurosci. Res.">
        <title>Differential expression of Musashi1 and nestin in the adult rat hippocampus after ischemia.</title>
        <authorList>
            <person name="Yagita Y."/>
            <person name="Kitagawa K."/>
            <person name="Sasaki T."/>
            <person name="Miyata T."/>
            <person name="Okano H."/>
            <person name="Hori M."/>
            <person name="Matsumoto M."/>
        </authorList>
    </citation>
    <scope>TISSUE SPECIFICITY</scope>
    <scope>SUBCELLULAR LOCATION</scope>
    <scope>INDUCTION</scope>
</reference>
<reference key="3">
    <citation type="journal article" date="2006" name="J. Cell Sci.">
        <title>A role for the ELAV RNA-binding proteins in neural stem cells: stabilization of Msi1 mRNA.</title>
        <authorList>
            <person name="Ratti A."/>
            <person name="Fallini C."/>
            <person name="Cova L."/>
            <person name="Fantozzi R."/>
            <person name="Calzarossa C."/>
            <person name="Zennaro E."/>
            <person name="Pascale A."/>
            <person name="Quattrone A."/>
            <person name="Silani V."/>
        </authorList>
    </citation>
    <scope>SUBCELLULAR LOCATION</scope>
    <scope>TISSUE SPECIFICITY</scope>
</reference>
<gene>
    <name type="primary">Msi1</name>
    <name type="synonym">Msi1h</name>
</gene>
<sequence length="362" mass="39134">METDAPQPGLASPDSPHDPCKMFIGGLSWQTTQEGLREYFGQFGEVKECLVMRDPLTKRSRGFGFVTFMDQAGVDKVLAQSRHELDSKTIDPKVAFPRRAQPKMVTRTKKIFVGGLSVNTTVEDVKHYFEQFGKVDDAMLMFDKTTNRHRGFGFVTFESEDIVEKVCEIHFHEINNKMVECKKAQPKEVMSPTGSARGRSRVMPYGMDAFMLGIGMLGYPGFQATTYASRSYTGLAPGYTYQFPEFRVERTPLPSAPVLPELTAIPLTAYGPMAAAAAAAAVVRGTGSHPWTMAPPPGSTPSRTGGFLGTTSPGPMAELYGAANQDSGVSSYISAASPAPSTGFGHSLGGPLIATAFTNGYH</sequence>